<name>TOG3D_AGEAP</name>
<evidence type="ECO:0000305" key="1"/>
<comment type="function">
    <text>Omega-agatoxins are antagonists of voltage-gated calcium channels. This toxin blocks calcium channels in insect central neurons but not at peripheral neuromuscular junctions. In vertebrates, it is broadly active against all high-threshold Cav1/CACNA1 channels and Cav2.2/CACNA1B channels.</text>
</comment>
<comment type="subcellular location">
    <subcellularLocation>
        <location>Secreted</location>
    </subcellularLocation>
</comment>
<comment type="tissue specificity">
    <text>Expressed by the venom gland.</text>
</comment>
<comment type="PTM">
    <text evidence="1">Disulfide bonds are present.</text>
</comment>
<comment type="miscellaneous">
    <text>Negative results: this toxin does not inhibit Cav3 (T-type) channels.</text>
</comment>
<comment type="similarity">
    <text evidence="1">Belongs to the neurotoxin 04 (omega-agtx) family. 03 (type II/III omega-agtx) subfamily.</text>
</comment>
<feature type="chain" id="PRO_0000087609" description="Omega-agatoxin-Aa3d">
    <location>
        <begin position="1"/>
        <end position="37" status="greater than"/>
    </location>
</feature>
<feature type="non-terminal residue">
    <location>
        <position position="37"/>
    </location>
</feature>
<keyword id="KW-0108">Calcium channel impairing toxin</keyword>
<keyword id="KW-0903">Direct protein sequencing</keyword>
<keyword id="KW-1015">Disulfide bond</keyword>
<keyword id="KW-0872">Ion channel impairing toxin</keyword>
<keyword id="KW-0528">Neurotoxin</keyword>
<keyword id="KW-0964">Secreted</keyword>
<keyword id="KW-0800">Toxin</keyword>
<keyword id="KW-1218">Voltage-gated calcium channel impairing toxin</keyword>
<organism>
    <name type="scientific">Agelenopsis aperta</name>
    <name type="common">North American funnel-web spider</name>
    <name type="synonym">Agelenopsis gertschi</name>
    <dbReference type="NCBI Taxonomy" id="6908"/>
    <lineage>
        <taxon>Eukaryota</taxon>
        <taxon>Metazoa</taxon>
        <taxon>Ecdysozoa</taxon>
        <taxon>Arthropoda</taxon>
        <taxon>Chelicerata</taxon>
        <taxon>Arachnida</taxon>
        <taxon>Araneae</taxon>
        <taxon>Araneomorphae</taxon>
        <taxon>Entelegynae</taxon>
        <taxon>Agelenidae</taxon>
        <taxon>Agelenopsis</taxon>
    </lineage>
</organism>
<reference key="1">
    <citation type="journal article" date="1994" name="Biochemistry">
        <title>Type III omega-agatoxins: a family of probes for similar binding sites on L- and N-type calcium channels.</title>
        <authorList>
            <person name="Ertel E.A."/>
            <person name="Warren V.A."/>
            <person name="Adams M.E."/>
            <person name="Griffin P.R."/>
            <person name="Cohen C.J."/>
            <person name="Smith M.M."/>
        </authorList>
    </citation>
    <scope>PROTEIN SEQUENCE</scope>
    <scope>CHARACTERIZATION</scope>
    <source>
        <tissue>Venom</tissue>
    </source>
</reference>
<dbReference type="PIR" id="F54252">
    <property type="entry name" value="F54252"/>
</dbReference>
<dbReference type="ArachnoServer" id="AS000181">
    <property type="toxin name" value="omega-agatoxin-Aa3d (N-terminal fragment)"/>
</dbReference>
<dbReference type="GO" id="GO:0005576">
    <property type="term" value="C:extracellular region"/>
    <property type="evidence" value="ECO:0007669"/>
    <property type="project" value="UniProtKB-SubCell"/>
</dbReference>
<dbReference type="GO" id="GO:0005246">
    <property type="term" value="F:calcium channel regulator activity"/>
    <property type="evidence" value="ECO:0007669"/>
    <property type="project" value="UniProtKB-KW"/>
</dbReference>
<dbReference type="GO" id="GO:0090729">
    <property type="term" value="F:toxin activity"/>
    <property type="evidence" value="ECO:0007669"/>
    <property type="project" value="UniProtKB-KW"/>
</dbReference>
<dbReference type="InterPro" id="IPR005853">
    <property type="entry name" value="Omega-agatoxin_II/III_CS"/>
</dbReference>
<dbReference type="InterPro" id="IPR013605">
    <property type="entry name" value="Toxin_34"/>
</dbReference>
<dbReference type="Pfam" id="PF08396">
    <property type="entry name" value="Toxin_34"/>
    <property type="match status" value="1"/>
</dbReference>
<dbReference type="PROSITE" id="PS60023">
    <property type="entry name" value="OMEGA_AGA_II_III"/>
    <property type="match status" value="1"/>
</dbReference>
<accession>P81746</accession>
<sequence>SCIKIGEDCDGDKDDCQCCRTNGYCSXYXLFGYLKSG</sequence>
<proteinExistence type="evidence at protein level"/>
<protein>
    <recommendedName>
        <fullName>Omega-agatoxin-Aa3d</fullName>
        <shortName>Omega-AGTX-Aa3d</shortName>
    </recommendedName>
    <alternativeName>
        <fullName>Omega-agatoxin IIID</fullName>
        <shortName>Omega-Aga-IIID</shortName>
    </alternativeName>
    <alternativeName>
        <fullName>Omega-agatoxin-3D</fullName>
    </alternativeName>
</protein>